<name>ASNA_SALSV</name>
<accession>B4TN45</accession>
<evidence type="ECO:0000255" key="1">
    <source>
        <dbReference type="HAMAP-Rule" id="MF_00555"/>
    </source>
</evidence>
<sequence>MKTAYIAKQRQISFVKSHFSRQLEERLGLIEVQAPILSRVGDGTQDNLSGCEKAVQVKVKALPDAQFEVVHSLAKWKRQTLGQHDFSAGEGLYTHMKALRPDEDRLSPLHSVYVDQWDWERVMGDGERQFSTLKSTVEAIWAGIKATEAEVHKQFGLAPFLPEQIQFVHSQELLSRYPDLDAKGRERAIAKELGAVFLVGIGGKLSDGHRHDVRAPDYDDWSSASELGYAGLNGDILVWNPVLEDAFELSSMGIRVDADTLMRQLALTGDEDRLQLEWHQALLRGEMPQTIGGGIGQSRLTMLLLQLPHIGQVQCGVWPAQVRESIPAIL</sequence>
<feature type="chain" id="PRO_1000129129" description="Aspartate--ammonia ligase">
    <location>
        <begin position="1"/>
        <end position="330"/>
    </location>
</feature>
<organism>
    <name type="scientific">Salmonella schwarzengrund (strain CVM19633)</name>
    <dbReference type="NCBI Taxonomy" id="439843"/>
    <lineage>
        <taxon>Bacteria</taxon>
        <taxon>Pseudomonadati</taxon>
        <taxon>Pseudomonadota</taxon>
        <taxon>Gammaproteobacteria</taxon>
        <taxon>Enterobacterales</taxon>
        <taxon>Enterobacteriaceae</taxon>
        <taxon>Salmonella</taxon>
    </lineage>
</organism>
<comment type="catalytic activity">
    <reaction evidence="1">
        <text>L-aspartate + NH4(+) + ATP = L-asparagine + AMP + diphosphate + H(+)</text>
        <dbReference type="Rhea" id="RHEA:11372"/>
        <dbReference type="ChEBI" id="CHEBI:15378"/>
        <dbReference type="ChEBI" id="CHEBI:28938"/>
        <dbReference type="ChEBI" id="CHEBI:29991"/>
        <dbReference type="ChEBI" id="CHEBI:30616"/>
        <dbReference type="ChEBI" id="CHEBI:33019"/>
        <dbReference type="ChEBI" id="CHEBI:58048"/>
        <dbReference type="ChEBI" id="CHEBI:456215"/>
        <dbReference type="EC" id="6.3.1.1"/>
    </reaction>
</comment>
<comment type="pathway">
    <text evidence="1">Amino-acid biosynthesis; L-asparagine biosynthesis; L-asparagine from L-aspartate (ammonia route): step 1/1.</text>
</comment>
<comment type="subcellular location">
    <subcellularLocation>
        <location evidence="1">Cytoplasm</location>
    </subcellularLocation>
</comment>
<comment type="similarity">
    <text evidence="1">Belongs to the class-II aminoacyl-tRNA synthetase family. AsnA subfamily.</text>
</comment>
<dbReference type="EC" id="6.3.1.1" evidence="1"/>
<dbReference type="EMBL" id="CP001127">
    <property type="protein sequence ID" value="ACF91144.1"/>
    <property type="molecule type" value="Genomic_DNA"/>
</dbReference>
<dbReference type="RefSeq" id="WP_000845123.1">
    <property type="nucleotide sequence ID" value="NC_011094.1"/>
</dbReference>
<dbReference type="SMR" id="B4TN45"/>
<dbReference type="KEGG" id="sew:SeSA_A4089"/>
<dbReference type="HOGENOM" id="CLU_071543_0_0_6"/>
<dbReference type="UniPathway" id="UPA00134">
    <property type="reaction ID" value="UER00194"/>
</dbReference>
<dbReference type="Proteomes" id="UP000001865">
    <property type="component" value="Chromosome"/>
</dbReference>
<dbReference type="GO" id="GO:0005829">
    <property type="term" value="C:cytosol"/>
    <property type="evidence" value="ECO:0007669"/>
    <property type="project" value="TreeGrafter"/>
</dbReference>
<dbReference type="GO" id="GO:0004071">
    <property type="term" value="F:aspartate-ammonia ligase activity"/>
    <property type="evidence" value="ECO:0007669"/>
    <property type="project" value="UniProtKB-UniRule"/>
</dbReference>
<dbReference type="GO" id="GO:0005524">
    <property type="term" value="F:ATP binding"/>
    <property type="evidence" value="ECO:0007669"/>
    <property type="project" value="UniProtKB-UniRule"/>
</dbReference>
<dbReference type="GO" id="GO:0070981">
    <property type="term" value="P:L-asparagine biosynthetic process"/>
    <property type="evidence" value="ECO:0007669"/>
    <property type="project" value="UniProtKB-UniRule"/>
</dbReference>
<dbReference type="CDD" id="cd00645">
    <property type="entry name" value="AsnA"/>
    <property type="match status" value="1"/>
</dbReference>
<dbReference type="FunFam" id="3.30.930.10:FF:000025">
    <property type="entry name" value="Aspartate--ammonia ligase"/>
    <property type="match status" value="1"/>
</dbReference>
<dbReference type="Gene3D" id="3.30.930.10">
    <property type="entry name" value="Bira Bifunctional Protein, Domain 2"/>
    <property type="match status" value="1"/>
</dbReference>
<dbReference type="HAMAP" id="MF_00555">
    <property type="entry name" value="AsnA"/>
    <property type="match status" value="1"/>
</dbReference>
<dbReference type="InterPro" id="IPR006195">
    <property type="entry name" value="aa-tRNA-synth_II"/>
</dbReference>
<dbReference type="InterPro" id="IPR045864">
    <property type="entry name" value="aa-tRNA-synth_II/BPL/LPL"/>
</dbReference>
<dbReference type="InterPro" id="IPR004618">
    <property type="entry name" value="AsnA"/>
</dbReference>
<dbReference type="NCBIfam" id="TIGR00669">
    <property type="entry name" value="asnA"/>
    <property type="match status" value="1"/>
</dbReference>
<dbReference type="PANTHER" id="PTHR30073">
    <property type="entry name" value="ASPARTATE--AMMONIA LIGASE"/>
    <property type="match status" value="1"/>
</dbReference>
<dbReference type="PANTHER" id="PTHR30073:SF5">
    <property type="entry name" value="ASPARTATE--AMMONIA LIGASE"/>
    <property type="match status" value="1"/>
</dbReference>
<dbReference type="Pfam" id="PF03590">
    <property type="entry name" value="AsnA"/>
    <property type="match status" value="1"/>
</dbReference>
<dbReference type="PIRSF" id="PIRSF001555">
    <property type="entry name" value="Asp_ammon_ligase"/>
    <property type="match status" value="1"/>
</dbReference>
<dbReference type="SUPFAM" id="SSF55681">
    <property type="entry name" value="Class II aaRS and biotin synthetases"/>
    <property type="match status" value="1"/>
</dbReference>
<dbReference type="PROSITE" id="PS50862">
    <property type="entry name" value="AA_TRNA_LIGASE_II"/>
    <property type="match status" value="1"/>
</dbReference>
<keyword id="KW-0028">Amino-acid biosynthesis</keyword>
<keyword id="KW-0061">Asparagine biosynthesis</keyword>
<keyword id="KW-0067">ATP-binding</keyword>
<keyword id="KW-0963">Cytoplasm</keyword>
<keyword id="KW-0436">Ligase</keyword>
<keyword id="KW-0547">Nucleotide-binding</keyword>
<gene>
    <name evidence="1" type="primary">asnA</name>
    <name type="ordered locus">SeSA_A4089</name>
</gene>
<proteinExistence type="inferred from homology"/>
<protein>
    <recommendedName>
        <fullName evidence="1">Aspartate--ammonia ligase</fullName>
        <ecNumber evidence="1">6.3.1.1</ecNumber>
    </recommendedName>
    <alternativeName>
        <fullName evidence="1">Asparagine synthetase A</fullName>
    </alternativeName>
</protein>
<reference key="1">
    <citation type="journal article" date="2011" name="J. Bacteriol.">
        <title>Comparative genomics of 28 Salmonella enterica isolates: evidence for CRISPR-mediated adaptive sublineage evolution.</title>
        <authorList>
            <person name="Fricke W.F."/>
            <person name="Mammel M.K."/>
            <person name="McDermott P.F."/>
            <person name="Tartera C."/>
            <person name="White D.G."/>
            <person name="Leclerc J.E."/>
            <person name="Ravel J."/>
            <person name="Cebula T.A."/>
        </authorList>
    </citation>
    <scope>NUCLEOTIDE SEQUENCE [LARGE SCALE GENOMIC DNA]</scope>
    <source>
        <strain>CVM19633</strain>
    </source>
</reference>